<evidence type="ECO:0000250" key="1"/>
<evidence type="ECO:0000255" key="2">
    <source>
        <dbReference type="HAMAP-Rule" id="MF_00100"/>
    </source>
</evidence>
<evidence type="ECO:0000256" key="3">
    <source>
        <dbReference type="SAM" id="MobiDB-lite"/>
    </source>
</evidence>
<accession>B7IUH1</accession>
<proteinExistence type="inferred from homology"/>
<protein>
    <recommendedName>
        <fullName evidence="2">Translation initiation factor IF-2</fullName>
    </recommendedName>
</protein>
<sequence length="688" mass="75906">MSKIRVHEYAKKNNISSKDLMTKLKEMNIEVSNHMTMLEDEVVNKLDNEYNTGAEKPSVADEFEVEEKVVRSKKNSNKKKKKGKGNEDKRQDNFAGRQQTQIVETPDKITFSGSLTVGELAKKLSKEPSEIIKKLFMLGIMATINQDLDKDTIELIATDYGIEVEEEIVVSETEFETFMDEQDDEENLKERPAVVTIMGHVDHGKTTLLDSIRNSKVTAGEAGGITQHIGAYQVEVNDKKITFLDTPGHAAFTTMRARGAQVTDITILVVAADDGVMPQTVEAISHAKAAGVPIIVAVNKMDKPAANPDRVMQELTEYELVPEAWGGDTIFVPISAIQGEGIDNLLEMILLVSEVEEYKANPNRYATGTVIEAQLDKGKGTIATLLVQNGTLRVGDPIVVGTSFGRVRAMVSDIGRRVKVAGPSTPVEITGLNEVPQAGDRFMAFADEKKARQIGESRAQEALVAQRGEKSKLSLEDLFQQIQESDVKEINLIVKADVQGSVEAMAASLRKIDVEGVKVKIIHTGVGAITESDIILASASNAIVIGFNVRPDVNAKRTAELENVDVRLHRIIYKVIEEIELAMQGMLDPEFEEKVIGQAEVRQTFKVTKVGTIAGCYVIDGKITRDSGVRIIRDGIVIFEGQLDTLKRFKDDVKEVAQNYECGITIERYNDLKEGDIIEAYVMEEVKR</sequence>
<organism>
    <name type="scientific">Bacillus cereus (strain G9842)</name>
    <dbReference type="NCBI Taxonomy" id="405531"/>
    <lineage>
        <taxon>Bacteria</taxon>
        <taxon>Bacillati</taxon>
        <taxon>Bacillota</taxon>
        <taxon>Bacilli</taxon>
        <taxon>Bacillales</taxon>
        <taxon>Bacillaceae</taxon>
        <taxon>Bacillus</taxon>
        <taxon>Bacillus cereus group</taxon>
    </lineage>
</organism>
<gene>
    <name evidence="2" type="primary">infB</name>
    <name type="ordered locus">BCG9842_B1333</name>
</gene>
<comment type="function">
    <text evidence="2">One of the essential components for the initiation of protein synthesis. Protects formylmethionyl-tRNA from spontaneous hydrolysis and promotes its binding to the 30S ribosomal subunits. Also involved in the hydrolysis of GTP during the formation of the 70S ribosomal complex.</text>
</comment>
<comment type="subcellular location">
    <subcellularLocation>
        <location evidence="2">Cytoplasm</location>
    </subcellularLocation>
</comment>
<comment type="similarity">
    <text evidence="2">Belongs to the TRAFAC class translation factor GTPase superfamily. Classic translation factor GTPase family. IF-2 subfamily.</text>
</comment>
<keyword id="KW-0963">Cytoplasm</keyword>
<keyword id="KW-0342">GTP-binding</keyword>
<keyword id="KW-0396">Initiation factor</keyword>
<keyword id="KW-0547">Nucleotide-binding</keyword>
<keyword id="KW-0648">Protein biosynthesis</keyword>
<feature type="chain" id="PRO_1000117321" description="Translation initiation factor IF-2">
    <location>
        <begin position="1"/>
        <end position="688"/>
    </location>
</feature>
<feature type="domain" description="tr-type G">
    <location>
        <begin position="190"/>
        <end position="359"/>
    </location>
</feature>
<feature type="region of interest" description="Disordered" evidence="3">
    <location>
        <begin position="62"/>
        <end position="103"/>
    </location>
</feature>
<feature type="region of interest" description="G1" evidence="1">
    <location>
        <begin position="199"/>
        <end position="206"/>
    </location>
</feature>
<feature type="region of interest" description="G2" evidence="1">
    <location>
        <begin position="224"/>
        <end position="228"/>
    </location>
</feature>
<feature type="region of interest" description="G3" evidence="1">
    <location>
        <begin position="245"/>
        <end position="248"/>
    </location>
</feature>
<feature type="region of interest" description="G4" evidence="1">
    <location>
        <begin position="299"/>
        <end position="302"/>
    </location>
</feature>
<feature type="region of interest" description="G5" evidence="1">
    <location>
        <begin position="335"/>
        <end position="337"/>
    </location>
</feature>
<feature type="compositionally biased region" description="Basic residues" evidence="3">
    <location>
        <begin position="71"/>
        <end position="83"/>
    </location>
</feature>
<feature type="binding site" evidence="2">
    <location>
        <begin position="199"/>
        <end position="206"/>
    </location>
    <ligand>
        <name>GTP</name>
        <dbReference type="ChEBI" id="CHEBI:37565"/>
    </ligand>
</feature>
<feature type="binding site" evidence="2">
    <location>
        <begin position="245"/>
        <end position="249"/>
    </location>
    <ligand>
        <name>GTP</name>
        <dbReference type="ChEBI" id="CHEBI:37565"/>
    </ligand>
</feature>
<feature type="binding site" evidence="2">
    <location>
        <begin position="299"/>
        <end position="302"/>
    </location>
    <ligand>
        <name>GTP</name>
        <dbReference type="ChEBI" id="CHEBI:37565"/>
    </ligand>
</feature>
<dbReference type="EMBL" id="CP001186">
    <property type="protein sequence ID" value="ACK96313.1"/>
    <property type="molecule type" value="Genomic_DNA"/>
</dbReference>
<dbReference type="RefSeq" id="WP_000036346.1">
    <property type="nucleotide sequence ID" value="NC_011772.1"/>
</dbReference>
<dbReference type="SMR" id="B7IUH1"/>
<dbReference type="KEGG" id="bcg:BCG9842_B1333"/>
<dbReference type="HOGENOM" id="CLU_006301_5_1_9"/>
<dbReference type="Proteomes" id="UP000006744">
    <property type="component" value="Chromosome"/>
</dbReference>
<dbReference type="GO" id="GO:0005829">
    <property type="term" value="C:cytosol"/>
    <property type="evidence" value="ECO:0007669"/>
    <property type="project" value="TreeGrafter"/>
</dbReference>
<dbReference type="GO" id="GO:0005525">
    <property type="term" value="F:GTP binding"/>
    <property type="evidence" value="ECO:0007669"/>
    <property type="project" value="UniProtKB-KW"/>
</dbReference>
<dbReference type="GO" id="GO:0003924">
    <property type="term" value="F:GTPase activity"/>
    <property type="evidence" value="ECO:0007669"/>
    <property type="project" value="UniProtKB-UniRule"/>
</dbReference>
<dbReference type="GO" id="GO:0003743">
    <property type="term" value="F:translation initiation factor activity"/>
    <property type="evidence" value="ECO:0007669"/>
    <property type="project" value="UniProtKB-UniRule"/>
</dbReference>
<dbReference type="CDD" id="cd01887">
    <property type="entry name" value="IF2_eIF5B"/>
    <property type="match status" value="1"/>
</dbReference>
<dbReference type="CDD" id="cd03702">
    <property type="entry name" value="IF2_mtIF2_II"/>
    <property type="match status" value="1"/>
</dbReference>
<dbReference type="CDD" id="cd03692">
    <property type="entry name" value="mtIF2_IVc"/>
    <property type="match status" value="1"/>
</dbReference>
<dbReference type="FunFam" id="2.40.30.10:FF:000007">
    <property type="entry name" value="Translation initiation factor IF-2"/>
    <property type="match status" value="1"/>
</dbReference>
<dbReference type="FunFam" id="2.40.30.10:FF:000008">
    <property type="entry name" value="Translation initiation factor IF-2"/>
    <property type="match status" value="1"/>
</dbReference>
<dbReference type="FunFam" id="3.40.50.10050:FF:000001">
    <property type="entry name" value="Translation initiation factor IF-2"/>
    <property type="match status" value="1"/>
</dbReference>
<dbReference type="FunFam" id="3.40.50.300:FF:000019">
    <property type="entry name" value="Translation initiation factor IF-2"/>
    <property type="match status" value="1"/>
</dbReference>
<dbReference type="Gene3D" id="1.10.10.2480">
    <property type="match status" value="1"/>
</dbReference>
<dbReference type="Gene3D" id="3.40.50.300">
    <property type="entry name" value="P-loop containing nucleotide triphosphate hydrolases"/>
    <property type="match status" value="1"/>
</dbReference>
<dbReference type="Gene3D" id="2.40.30.10">
    <property type="entry name" value="Translation factors"/>
    <property type="match status" value="2"/>
</dbReference>
<dbReference type="Gene3D" id="3.40.50.10050">
    <property type="entry name" value="Translation initiation factor IF- 2, domain 3"/>
    <property type="match status" value="1"/>
</dbReference>
<dbReference type="HAMAP" id="MF_00100_B">
    <property type="entry name" value="IF_2_B"/>
    <property type="match status" value="1"/>
</dbReference>
<dbReference type="InterPro" id="IPR053905">
    <property type="entry name" value="EF-G-like_DII"/>
</dbReference>
<dbReference type="InterPro" id="IPR044145">
    <property type="entry name" value="IF2_II"/>
</dbReference>
<dbReference type="InterPro" id="IPR006847">
    <property type="entry name" value="IF2_N"/>
</dbReference>
<dbReference type="InterPro" id="IPR027417">
    <property type="entry name" value="P-loop_NTPase"/>
</dbReference>
<dbReference type="InterPro" id="IPR005225">
    <property type="entry name" value="Small_GTP-bd"/>
</dbReference>
<dbReference type="InterPro" id="IPR000795">
    <property type="entry name" value="T_Tr_GTP-bd_dom"/>
</dbReference>
<dbReference type="InterPro" id="IPR000178">
    <property type="entry name" value="TF_IF2_bacterial-like"/>
</dbReference>
<dbReference type="InterPro" id="IPR015760">
    <property type="entry name" value="TIF_IF2"/>
</dbReference>
<dbReference type="InterPro" id="IPR023115">
    <property type="entry name" value="TIF_IF2_dom3"/>
</dbReference>
<dbReference type="InterPro" id="IPR036925">
    <property type="entry name" value="TIF_IF2_dom3_sf"/>
</dbReference>
<dbReference type="InterPro" id="IPR009000">
    <property type="entry name" value="Transl_B-barrel_sf"/>
</dbReference>
<dbReference type="NCBIfam" id="TIGR00487">
    <property type="entry name" value="IF-2"/>
    <property type="match status" value="1"/>
</dbReference>
<dbReference type="NCBIfam" id="TIGR00231">
    <property type="entry name" value="small_GTP"/>
    <property type="match status" value="1"/>
</dbReference>
<dbReference type="PANTHER" id="PTHR43381:SF5">
    <property type="entry name" value="TR-TYPE G DOMAIN-CONTAINING PROTEIN"/>
    <property type="match status" value="1"/>
</dbReference>
<dbReference type="PANTHER" id="PTHR43381">
    <property type="entry name" value="TRANSLATION INITIATION FACTOR IF-2-RELATED"/>
    <property type="match status" value="1"/>
</dbReference>
<dbReference type="Pfam" id="PF22042">
    <property type="entry name" value="EF-G_D2"/>
    <property type="match status" value="1"/>
</dbReference>
<dbReference type="Pfam" id="PF00009">
    <property type="entry name" value="GTP_EFTU"/>
    <property type="match status" value="1"/>
</dbReference>
<dbReference type="Pfam" id="PF11987">
    <property type="entry name" value="IF-2"/>
    <property type="match status" value="1"/>
</dbReference>
<dbReference type="Pfam" id="PF04760">
    <property type="entry name" value="IF2_N"/>
    <property type="match status" value="2"/>
</dbReference>
<dbReference type="SUPFAM" id="SSF52156">
    <property type="entry name" value="Initiation factor IF2/eIF5b, domain 3"/>
    <property type="match status" value="1"/>
</dbReference>
<dbReference type="SUPFAM" id="SSF52540">
    <property type="entry name" value="P-loop containing nucleoside triphosphate hydrolases"/>
    <property type="match status" value="1"/>
</dbReference>
<dbReference type="SUPFAM" id="SSF50447">
    <property type="entry name" value="Translation proteins"/>
    <property type="match status" value="2"/>
</dbReference>
<dbReference type="PROSITE" id="PS51722">
    <property type="entry name" value="G_TR_2"/>
    <property type="match status" value="1"/>
</dbReference>
<dbReference type="PROSITE" id="PS01176">
    <property type="entry name" value="IF2"/>
    <property type="match status" value="1"/>
</dbReference>
<name>IF2_BACC2</name>
<reference key="1">
    <citation type="submission" date="2008-10" db="EMBL/GenBank/DDBJ databases">
        <title>Genome sequence of Bacillus cereus G9842.</title>
        <authorList>
            <person name="Dodson R.J."/>
            <person name="Durkin A.S."/>
            <person name="Rosovitz M.J."/>
            <person name="Rasko D.A."/>
            <person name="Hoffmaster A."/>
            <person name="Ravel J."/>
            <person name="Sutton G."/>
        </authorList>
    </citation>
    <scope>NUCLEOTIDE SEQUENCE [LARGE SCALE GENOMIC DNA]</scope>
    <source>
        <strain>G9842</strain>
    </source>
</reference>